<feature type="chain" id="PRO_0000150840" description="Olfactory receptor 5P58">
    <location>
        <begin position="1"/>
        <end position="323"/>
    </location>
</feature>
<feature type="topological domain" description="Extracellular" evidence="1">
    <location>
        <begin position="1"/>
        <end position="28"/>
    </location>
</feature>
<feature type="transmembrane region" description="Helical; Name=1" evidence="1">
    <location>
        <begin position="29"/>
        <end position="49"/>
    </location>
</feature>
<feature type="topological domain" description="Cytoplasmic" evidence="1">
    <location>
        <begin position="50"/>
        <end position="57"/>
    </location>
</feature>
<feature type="transmembrane region" description="Helical; Name=2" evidence="1">
    <location>
        <begin position="58"/>
        <end position="78"/>
    </location>
</feature>
<feature type="topological domain" description="Extracellular" evidence="1">
    <location>
        <begin position="79"/>
        <end position="102"/>
    </location>
</feature>
<feature type="transmembrane region" description="Helical; Name=3" evidence="1">
    <location>
        <begin position="103"/>
        <end position="123"/>
    </location>
</feature>
<feature type="topological domain" description="Cytoplasmic" evidence="1">
    <location>
        <begin position="124"/>
        <end position="136"/>
    </location>
</feature>
<feature type="transmembrane region" description="Helical; Name=4" evidence="1">
    <location>
        <begin position="137"/>
        <end position="157"/>
    </location>
</feature>
<feature type="topological domain" description="Extracellular" evidence="1">
    <location>
        <begin position="158"/>
        <end position="199"/>
    </location>
</feature>
<feature type="transmembrane region" description="Helical; Name=5" evidence="1">
    <location>
        <begin position="200"/>
        <end position="220"/>
    </location>
</feature>
<feature type="topological domain" description="Cytoplasmic" evidence="1">
    <location>
        <begin position="221"/>
        <end position="240"/>
    </location>
</feature>
<feature type="transmembrane region" description="Helical; Name=6" evidence="1">
    <location>
        <begin position="241"/>
        <end position="261"/>
    </location>
</feature>
<feature type="topological domain" description="Extracellular" evidence="1">
    <location>
        <begin position="262"/>
        <end position="274"/>
    </location>
</feature>
<feature type="transmembrane region" description="Helical; Name=7" evidence="1">
    <location>
        <begin position="275"/>
        <end position="295"/>
    </location>
</feature>
<feature type="topological domain" description="Cytoplasmic" evidence="1">
    <location>
        <begin position="296"/>
        <end position="323"/>
    </location>
</feature>
<feature type="glycosylation site" description="N-linked (GlcNAc...) asparagine" evidence="1">
    <location>
        <position position="8"/>
    </location>
</feature>
<feature type="glycosylation site" description="N-linked (GlcNAc...) asparagine" evidence="1">
    <location>
        <position position="92"/>
    </location>
</feature>
<feature type="glycosylation site" description="N-linked (GlcNAc...) asparagine" evidence="1">
    <location>
        <position position="268"/>
    </location>
</feature>
<feature type="disulfide bond" evidence="2">
    <location>
        <begin position="100"/>
        <end position="192"/>
    </location>
</feature>
<reference key="1">
    <citation type="journal article" date="2002" name="Nat. Neurosci.">
        <title>The olfactory receptor gene superfamily of the mouse.</title>
        <authorList>
            <person name="Zhang X."/>
            <person name="Firestein S."/>
        </authorList>
    </citation>
    <scope>NUCLEOTIDE SEQUENCE [GENOMIC DNA]</scope>
</reference>
<reference key="2">
    <citation type="journal article" date="2002" name="Hum. Mol. Genet.">
        <title>Different evolutionary processes shaped the mouse and human olfactory receptor gene families.</title>
        <authorList>
            <person name="Young J.M."/>
            <person name="Friedman C."/>
            <person name="Williams E.M."/>
            <person name="Ross J.A."/>
            <person name="Tonnes-Priddy L."/>
            <person name="Trask B.J."/>
        </authorList>
    </citation>
    <scope>NUCLEOTIDE SEQUENCE [GENOMIC DNA]</scope>
</reference>
<reference key="3">
    <citation type="journal article" date="2002" name="Hum. Mol. Genet.">
        <authorList>
            <person name="Young J.M."/>
            <person name="Friedman C."/>
            <person name="Williams E.M."/>
            <person name="Ross J.A."/>
            <person name="Tonnes-Priddy L."/>
            <person name="Trask B.J."/>
        </authorList>
    </citation>
    <scope>ERRATUM OF PUBMED:11875048</scope>
</reference>
<dbReference type="EMBL" id="AY073362">
    <property type="protein sequence ID" value="AAL61025.1"/>
    <property type="molecule type" value="Genomic_DNA"/>
</dbReference>
<dbReference type="EMBL" id="AY317590">
    <property type="protein sequence ID" value="AAP70986.1"/>
    <property type="molecule type" value="Genomic_DNA"/>
</dbReference>
<dbReference type="CCDS" id="CCDS21704.1"/>
<dbReference type="RefSeq" id="NP_666944.1">
    <property type="nucleotide sequence ID" value="NM_146733.1"/>
</dbReference>
<dbReference type="SMR" id="Q8VG03"/>
<dbReference type="FunCoup" id="Q8VG03">
    <property type="interactions" value="1145"/>
</dbReference>
<dbReference type="STRING" id="10090.ENSMUSP00000150755"/>
<dbReference type="GlyCosmos" id="Q8VG03">
    <property type="glycosylation" value="3 sites, No reported glycans"/>
</dbReference>
<dbReference type="GlyGen" id="Q8VG03">
    <property type="glycosylation" value="3 sites"/>
</dbReference>
<dbReference type="PaxDb" id="10090-ENSMUSP00000079948"/>
<dbReference type="DNASU" id="258728"/>
<dbReference type="Ensembl" id="ENSMUST00000081184.3">
    <property type="protein sequence ID" value="ENSMUSP00000079948.3"/>
    <property type="gene ID" value="ENSMUSG00000059031.4"/>
</dbReference>
<dbReference type="Ensembl" id="ENSMUST00000217304.2">
    <property type="protein sequence ID" value="ENSMUSP00000150755.2"/>
    <property type="gene ID" value="ENSMUSG00000059031.4"/>
</dbReference>
<dbReference type="GeneID" id="258728"/>
<dbReference type="KEGG" id="mmu:258728"/>
<dbReference type="UCSC" id="uc009jbx.1">
    <property type="organism name" value="mouse"/>
</dbReference>
<dbReference type="AGR" id="MGI:3030316"/>
<dbReference type="CTD" id="258728"/>
<dbReference type="MGI" id="MGI:3030316">
    <property type="gene designation" value="Or5p58"/>
</dbReference>
<dbReference type="VEuPathDB" id="HostDB:ENSMUSG00000059031"/>
<dbReference type="eggNOG" id="ENOG502SKA1">
    <property type="taxonomic scope" value="Eukaryota"/>
</dbReference>
<dbReference type="GeneTree" id="ENSGT01130000278279"/>
<dbReference type="HOGENOM" id="CLU_012526_1_0_1"/>
<dbReference type="InParanoid" id="Q8VG03"/>
<dbReference type="OMA" id="AIFGMVE"/>
<dbReference type="OrthoDB" id="9440694at2759"/>
<dbReference type="PhylomeDB" id="Q8VG03"/>
<dbReference type="TreeFam" id="TF338848"/>
<dbReference type="BioGRID-ORCS" id="258728">
    <property type="hits" value="2 hits in 72 CRISPR screens"/>
</dbReference>
<dbReference type="ChiTaRS" id="Olfr482">
    <property type="organism name" value="mouse"/>
</dbReference>
<dbReference type="PRO" id="PR:Q8VG03"/>
<dbReference type="Proteomes" id="UP000000589">
    <property type="component" value="Chromosome 7"/>
</dbReference>
<dbReference type="RNAct" id="Q8VG03">
    <property type="molecule type" value="protein"/>
</dbReference>
<dbReference type="Bgee" id="ENSMUSG00000059031">
    <property type="expression patterns" value="Expressed in embryonic brain and 38 other cell types or tissues"/>
</dbReference>
<dbReference type="GO" id="GO:0016020">
    <property type="term" value="C:membrane"/>
    <property type="evidence" value="ECO:0000247"/>
    <property type="project" value="MGI"/>
</dbReference>
<dbReference type="GO" id="GO:0005886">
    <property type="term" value="C:plasma membrane"/>
    <property type="evidence" value="ECO:0007669"/>
    <property type="project" value="UniProtKB-SubCell"/>
</dbReference>
<dbReference type="GO" id="GO:0004930">
    <property type="term" value="F:G protein-coupled receptor activity"/>
    <property type="evidence" value="ECO:0007669"/>
    <property type="project" value="UniProtKB-KW"/>
</dbReference>
<dbReference type="GO" id="GO:0004984">
    <property type="term" value="F:olfactory receptor activity"/>
    <property type="evidence" value="ECO:0000247"/>
    <property type="project" value="MGI"/>
</dbReference>
<dbReference type="GO" id="GO:0007186">
    <property type="term" value="P:G protein-coupled receptor signaling pathway"/>
    <property type="evidence" value="ECO:0000247"/>
    <property type="project" value="MGI"/>
</dbReference>
<dbReference type="GO" id="GO:0007608">
    <property type="term" value="P:sensory perception of smell"/>
    <property type="evidence" value="ECO:0000247"/>
    <property type="project" value="MGI"/>
</dbReference>
<dbReference type="CDD" id="cd15416">
    <property type="entry name" value="7tmA_OR5P-like"/>
    <property type="match status" value="1"/>
</dbReference>
<dbReference type="FunFam" id="1.20.1070.10:FF:000004">
    <property type="entry name" value="Olfactory receptor"/>
    <property type="match status" value="1"/>
</dbReference>
<dbReference type="Gene3D" id="1.20.1070.10">
    <property type="entry name" value="Rhodopsin 7-helix transmembrane proteins"/>
    <property type="match status" value="1"/>
</dbReference>
<dbReference type="InterPro" id="IPR000276">
    <property type="entry name" value="GPCR_Rhodpsn"/>
</dbReference>
<dbReference type="InterPro" id="IPR017452">
    <property type="entry name" value="GPCR_Rhodpsn_7TM"/>
</dbReference>
<dbReference type="InterPro" id="IPR000725">
    <property type="entry name" value="Olfact_rcpt"/>
</dbReference>
<dbReference type="PANTHER" id="PTHR48018">
    <property type="entry name" value="OLFACTORY RECEPTOR"/>
    <property type="match status" value="1"/>
</dbReference>
<dbReference type="Pfam" id="PF13853">
    <property type="entry name" value="7tm_4"/>
    <property type="match status" value="1"/>
</dbReference>
<dbReference type="PRINTS" id="PR00237">
    <property type="entry name" value="GPCRRHODOPSN"/>
</dbReference>
<dbReference type="PRINTS" id="PR00245">
    <property type="entry name" value="OLFACTORYR"/>
</dbReference>
<dbReference type="SUPFAM" id="SSF81321">
    <property type="entry name" value="Family A G protein-coupled receptor-like"/>
    <property type="match status" value="1"/>
</dbReference>
<dbReference type="PROSITE" id="PS00237">
    <property type="entry name" value="G_PROTEIN_RECEP_F1_1"/>
    <property type="match status" value="1"/>
</dbReference>
<dbReference type="PROSITE" id="PS50262">
    <property type="entry name" value="G_PROTEIN_RECEP_F1_2"/>
    <property type="match status" value="1"/>
</dbReference>
<protein>
    <recommendedName>
        <fullName evidence="3">Olfactory receptor 5P58</fullName>
    </recommendedName>
    <alternativeName>
        <fullName>Olfactory receptor 204-14</fullName>
    </alternativeName>
    <alternativeName>
        <fullName>Olfactory receptor 482</fullName>
    </alternativeName>
</protein>
<accession>Q8VG03</accession>
<proteinExistence type="inferred from homology"/>
<evidence type="ECO:0000255" key="1"/>
<evidence type="ECO:0000255" key="2">
    <source>
        <dbReference type="PROSITE-ProRule" id="PRU00521"/>
    </source>
</evidence>
<evidence type="ECO:0000305" key="3"/>
<evidence type="ECO:0000312" key="4">
    <source>
        <dbReference type="MGI" id="MGI:3030316"/>
    </source>
</evidence>
<name>O5P58_MOUSE</name>
<organism>
    <name type="scientific">Mus musculus</name>
    <name type="common">Mouse</name>
    <dbReference type="NCBI Taxonomy" id="10090"/>
    <lineage>
        <taxon>Eukaryota</taxon>
        <taxon>Metazoa</taxon>
        <taxon>Chordata</taxon>
        <taxon>Craniata</taxon>
        <taxon>Vertebrata</taxon>
        <taxon>Euteleostomi</taxon>
        <taxon>Mammalia</taxon>
        <taxon>Eutheria</taxon>
        <taxon>Euarchontoglires</taxon>
        <taxon>Glires</taxon>
        <taxon>Rodentia</taxon>
        <taxon>Myomorpha</taxon>
        <taxon>Muroidea</taxon>
        <taxon>Muridae</taxon>
        <taxon>Murinae</taxon>
        <taxon>Mus</taxon>
        <taxon>Mus</taxon>
    </lineage>
</organism>
<keyword id="KW-1003">Cell membrane</keyword>
<keyword id="KW-1015">Disulfide bond</keyword>
<keyword id="KW-0297">G-protein coupled receptor</keyword>
<keyword id="KW-0325">Glycoprotein</keyword>
<keyword id="KW-0472">Membrane</keyword>
<keyword id="KW-0552">Olfaction</keyword>
<keyword id="KW-0675">Receptor</keyword>
<keyword id="KW-1185">Reference proteome</keyword>
<keyword id="KW-0716">Sensory transduction</keyword>
<keyword id="KW-0807">Transducer</keyword>
<keyword id="KW-0812">Transmembrane</keyword>
<keyword id="KW-1133">Transmembrane helix</keyword>
<gene>
    <name evidence="4" type="primary">Or5p58</name>
    <name evidence="4" type="synonym">Mor204-14</name>
    <name evidence="4" type="synonym">Olfr482</name>
</gene>
<comment type="function">
    <text>Potential odorant receptor.</text>
</comment>
<comment type="subcellular location">
    <subcellularLocation>
        <location evidence="3">Cell membrane</location>
        <topology evidence="1">Multi-pass membrane protein</topology>
    </subcellularLocation>
</comment>
<comment type="similarity">
    <text evidence="2">Belongs to the G-protein coupled receptor 1 family.</text>
</comment>
<sequence>MAFLEDGNHTAVTEFILVGLTDDPVLKVILFTIILCIYLVTVSGNLSTILLIRVSSQLHHPMYFFLSHLASVDLGYSSSVTPNMLINFLAENNTISYIGCSIQFGSATFFGVLECFLLAVMAYDRFVAICNPLLYSIKMSTQVCVKLVVGSYIGSSLNASFVTVSIFNLLFCGPNKINHFFCDFDPLIELSCSDVSVPVAVTSCSAGLITMITVFVIAVSYTYILITVLKMRSTEGRHKAFSTCTSHLTAVTLFYGTVTFIYVMPKSNYSTDQNKVVSVFYMVVIPMLNPLIYSLRNNEIKGALKRQLGKKIFSQSNILFCKS</sequence>